<sequence length="349" mass="39195">MTKLRKIIHIDMDYFFAQVEEKANPSLKDKPFAVGGTNPKRGVISTCNYIAREYGVRSAMPTAIAMQKCPNLILLNTDFAKYKAASAVIRDIFYSFTDKVEPLSLDEAYLDVTDVKEYKNSATLIAQAIKQEIFNKTGLTGSAGVAPNKLLAKIASDINKPNGLYVITPEQVDSFVKDLPVKKLFGVGKVSQEKLKTMNVETCLDLQQLSLATLLDKFGKFGNNLYSYARGIDNREVNPVRIRKSVSVENTYLEDLKTLNACLEKLPSLYDKLTSRMTEEHYKSIVGIVVKFTDTKFNKTSLTRVAKTLDKEAIKSLIIELYQKQNHPIRLIGIGVKLGEVEDRQMKLF</sequence>
<reference key="1">
    <citation type="journal article" date="2007" name="Genome Biol.">
        <title>Comparison of Francisella tularensis genomes reveals evolutionary events associated with the emergence of human pathogenic strains.</title>
        <authorList>
            <person name="Rohmer L."/>
            <person name="Fong C."/>
            <person name="Abmayr S."/>
            <person name="Wasnick M."/>
            <person name="Larson Freeman T.J."/>
            <person name="Radey M."/>
            <person name="Guina T."/>
            <person name="Svensson K."/>
            <person name="Hayden H.S."/>
            <person name="Jacobs M."/>
            <person name="Gallagher L.A."/>
            <person name="Manoil C."/>
            <person name="Ernst R.K."/>
            <person name="Drees B."/>
            <person name="Buckley D."/>
            <person name="Haugen E."/>
            <person name="Bovee D."/>
            <person name="Zhou Y."/>
            <person name="Chang J."/>
            <person name="Levy R."/>
            <person name="Lim R."/>
            <person name="Gillett W."/>
            <person name="Guenthener D."/>
            <person name="Kang A."/>
            <person name="Shaffer S.A."/>
            <person name="Taylor G."/>
            <person name="Chen J."/>
            <person name="Gallis B."/>
            <person name="D'Argenio D.A."/>
            <person name="Forsman M."/>
            <person name="Olson M.V."/>
            <person name="Goodlett D.R."/>
            <person name="Kaul R."/>
            <person name="Miller S.I."/>
            <person name="Brittnacher M.J."/>
        </authorList>
    </citation>
    <scope>NUCLEOTIDE SEQUENCE [LARGE SCALE GENOMIC DNA]</scope>
    <source>
        <strain>U112</strain>
    </source>
</reference>
<name>DPO4_FRATN</name>
<proteinExistence type="inferred from homology"/>
<evidence type="ECO:0000255" key="1">
    <source>
        <dbReference type="HAMAP-Rule" id="MF_01113"/>
    </source>
</evidence>
<keyword id="KW-0963">Cytoplasm</keyword>
<keyword id="KW-0227">DNA damage</keyword>
<keyword id="KW-0234">DNA repair</keyword>
<keyword id="KW-0235">DNA replication</keyword>
<keyword id="KW-0238">DNA-binding</keyword>
<keyword id="KW-0239">DNA-directed DNA polymerase</keyword>
<keyword id="KW-0460">Magnesium</keyword>
<keyword id="KW-0479">Metal-binding</keyword>
<keyword id="KW-0515">Mutator protein</keyword>
<keyword id="KW-0548">Nucleotidyltransferase</keyword>
<keyword id="KW-0808">Transferase</keyword>
<gene>
    <name evidence="1" type="primary">dinB</name>
    <name type="ordered locus">FTN_0986</name>
</gene>
<dbReference type="EC" id="2.7.7.7" evidence="1"/>
<dbReference type="EMBL" id="CP000439">
    <property type="protein sequence ID" value="ABK89874.1"/>
    <property type="molecule type" value="Genomic_DNA"/>
</dbReference>
<dbReference type="RefSeq" id="WP_003039401.1">
    <property type="nucleotide sequence ID" value="NC_008601.1"/>
</dbReference>
<dbReference type="SMR" id="A0Q6K9"/>
<dbReference type="KEGG" id="ftn:FTN_0986"/>
<dbReference type="KEGG" id="ftx:AW25_1026"/>
<dbReference type="BioCyc" id="FTUL401614:G1G75-1026-MONOMER"/>
<dbReference type="Proteomes" id="UP000000762">
    <property type="component" value="Chromosome"/>
</dbReference>
<dbReference type="GO" id="GO:0005829">
    <property type="term" value="C:cytosol"/>
    <property type="evidence" value="ECO:0007669"/>
    <property type="project" value="TreeGrafter"/>
</dbReference>
<dbReference type="GO" id="GO:0003684">
    <property type="term" value="F:damaged DNA binding"/>
    <property type="evidence" value="ECO:0007669"/>
    <property type="project" value="InterPro"/>
</dbReference>
<dbReference type="GO" id="GO:0003887">
    <property type="term" value="F:DNA-directed DNA polymerase activity"/>
    <property type="evidence" value="ECO:0007669"/>
    <property type="project" value="UniProtKB-UniRule"/>
</dbReference>
<dbReference type="GO" id="GO:0000287">
    <property type="term" value="F:magnesium ion binding"/>
    <property type="evidence" value="ECO:0007669"/>
    <property type="project" value="UniProtKB-UniRule"/>
</dbReference>
<dbReference type="GO" id="GO:0006261">
    <property type="term" value="P:DNA-templated DNA replication"/>
    <property type="evidence" value="ECO:0007669"/>
    <property type="project" value="UniProtKB-UniRule"/>
</dbReference>
<dbReference type="GO" id="GO:0042276">
    <property type="term" value="P:error-prone translesion synthesis"/>
    <property type="evidence" value="ECO:0007669"/>
    <property type="project" value="TreeGrafter"/>
</dbReference>
<dbReference type="GO" id="GO:0009432">
    <property type="term" value="P:SOS response"/>
    <property type="evidence" value="ECO:0007669"/>
    <property type="project" value="TreeGrafter"/>
</dbReference>
<dbReference type="CDD" id="cd03586">
    <property type="entry name" value="PolY_Pol_IV_kappa"/>
    <property type="match status" value="1"/>
</dbReference>
<dbReference type="FunFam" id="1.10.150.20:FF:000019">
    <property type="entry name" value="DNA polymerase IV"/>
    <property type="match status" value="1"/>
</dbReference>
<dbReference type="FunFam" id="3.40.1170.60:FF:000001">
    <property type="entry name" value="DNA polymerase IV"/>
    <property type="match status" value="1"/>
</dbReference>
<dbReference type="Gene3D" id="3.30.70.270">
    <property type="match status" value="1"/>
</dbReference>
<dbReference type="Gene3D" id="3.40.1170.60">
    <property type="match status" value="1"/>
</dbReference>
<dbReference type="Gene3D" id="1.10.150.20">
    <property type="entry name" value="5' to 3' exonuclease, C-terminal subdomain"/>
    <property type="match status" value="1"/>
</dbReference>
<dbReference type="Gene3D" id="3.30.1490.100">
    <property type="entry name" value="DNA polymerase, Y-family, little finger domain"/>
    <property type="match status" value="1"/>
</dbReference>
<dbReference type="HAMAP" id="MF_01113">
    <property type="entry name" value="DNApol_IV"/>
    <property type="match status" value="1"/>
</dbReference>
<dbReference type="InterPro" id="IPR043502">
    <property type="entry name" value="DNA/RNA_pol_sf"/>
</dbReference>
<dbReference type="InterPro" id="IPR036775">
    <property type="entry name" value="DNA_pol_Y-fam_lit_finger_sf"/>
</dbReference>
<dbReference type="InterPro" id="IPR017961">
    <property type="entry name" value="DNA_pol_Y-fam_little_finger"/>
</dbReference>
<dbReference type="InterPro" id="IPR050116">
    <property type="entry name" value="DNA_polymerase-Y"/>
</dbReference>
<dbReference type="InterPro" id="IPR022880">
    <property type="entry name" value="DNApol_IV"/>
</dbReference>
<dbReference type="InterPro" id="IPR053848">
    <property type="entry name" value="IMS_HHH_1"/>
</dbReference>
<dbReference type="InterPro" id="IPR043128">
    <property type="entry name" value="Rev_trsase/Diguanyl_cyclase"/>
</dbReference>
<dbReference type="InterPro" id="IPR001126">
    <property type="entry name" value="UmuC"/>
</dbReference>
<dbReference type="NCBIfam" id="NF002677">
    <property type="entry name" value="PRK02406.1"/>
    <property type="match status" value="1"/>
</dbReference>
<dbReference type="PANTHER" id="PTHR11076:SF33">
    <property type="entry name" value="DNA POLYMERASE KAPPA"/>
    <property type="match status" value="1"/>
</dbReference>
<dbReference type="PANTHER" id="PTHR11076">
    <property type="entry name" value="DNA REPAIR POLYMERASE UMUC / TRANSFERASE FAMILY MEMBER"/>
    <property type="match status" value="1"/>
</dbReference>
<dbReference type="Pfam" id="PF00817">
    <property type="entry name" value="IMS"/>
    <property type="match status" value="1"/>
</dbReference>
<dbReference type="Pfam" id="PF11799">
    <property type="entry name" value="IMS_C"/>
    <property type="match status" value="1"/>
</dbReference>
<dbReference type="Pfam" id="PF21999">
    <property type="entry name" value="IMS_HHH_1"/>
    <property type="match status" value="1"/>
</dbReference>
<dbReference type="SUPFAM" id="SSF56672">
    <property type="entry name" value="DNA/RNA polymerases"/>
    <property type="match status" value="1"/>
</dbReference>
<dbReference type="SUPFAM" id="SSF100879">
    <property type="entry name" value="Lesion bypass DNA polymerase (Y-family), little finger domain"/>
    <property type="match status" value="1"/>
</dbReference>
<dbReference type="PROSITE" id="PS50173">
    <property type="entry name" value="UMUC"/>
    <property type="match status" value="1"/>
</dbReference>
<organism>
    <name type="scientific">Francisella tularensis subsp. novicida (strain U112)</name>
    <dbReference type="NCBI Taxonomy" id="401614"/>
    <lineage>
        <taxon>Bacteria</taxon>
        <taxon>Pseudomonadati</taxon>
        <taxon>Pseudomonadota</taxon>
        <taxon>Gammaproteobacteria</taxon>
        <taxon>Thiotrichales</taxon>
        <taxon>Francisellaceae</taxon>
        <taxon>Francisella</taxon>
    </lineage>
</organism>
<feature type="chain" id="PRO_1000137134" description="DNA polymerase IV">
    <location>
        <begin position="1"/>
        <end position="349"/>
    </location>
</feature>
<feature type="domain" description="UmuC" evidence="1">
    <location>
        <begin position="7"/>
        <end position="188"/>
    </location>
</feature>
<feature type="active site" evidence="1">
    <location>
        <position position="107"/>
    </location>
</feature>
<feature type="binding site" evidence="1">
    <location>
        <position position="11"/>
    </location>
    <ligand>
        <name>Mg(2+)</name>
        <dbReference type="ChEBI" id="CHEBI:18420"/>
    </ligand>
</feature>
<feature type="binding site" evidence="1">
    <location>
        <position position="106"/>
    </location>
    <ligand>
        <name>Mg(2+)</name>
        <dbReference type="ChEBI" id="CHEBI:18420"/>
    </ligand>
</feature>
<feature type="site" description="Substrate discrimination" evidence="1">
    <location>
        <position position="16"/>
    </location>
</feature>
<comment type="function">
    <text evidence="1">Poorly processive, error-prone DNA polymerase involved in untargeted mutagenesis. Copies undamaged DNA at stalled replication forks, which arise in vivo from mismatched or misaligned primer ends. These misaligned primers can be extended by PolIV. Exhibits no 3'-5' exonuclease (proofreading) activity. May be involved in translesional synthesis, in conjunction with the beta clamp from PolIII.</text>
</comment>
<comment type="catalytic activity">
    <reaction evidence="1">
        <text>DNA(n) + a 2'-deoxyribonucleoside 5'-triphosphate = DNA(n+1) + diphosphate</text>
        <dbReference type="Rhea" id="RHEA:22508"/>
        <dbReference type="Rhea" id="RHEA-COMP:17339"/>
        <dbReference type="Rhea" id="RHEA-COMP:17340"/>
        <dbReference type="ChEBI" id="CHEBI:33019"/>
        <dbReference type="ChEBI" id="CHEBI:61560"/>
        <dbReference type="ChEBI" id="CHEBI:173112"/>
        <dbReference type="EC" id="2.7.7.7"/>
    </reaction>
</comment>
<comment type="cofactor">
    <cofactor evidence="1">
        <name>Mg(2+)</name>
        <dbReference type="ChEBI" id="CHEBI:18420"/>
    </cofactor>
    <text evidence="1">Binds 2 magnesium ions per subunit.</text>
</comment>
<comment type="subunit">
    <text evidence="1">Monomer.</text>
</comment>
<comment type="subcellular location">
    <subcellularLocation>
        <location evidence="1">Cytoplasm</location>
    </subcellularLocation>
</comment>
<comment type="similarity">
    <text evidence="1">Belongs to the DNA polymerase type-Y family.</text>
</comment>
<accession>A0Q6K9</accession>
<protein>
    <recommendedName>
        <fullName evidence="1">DNA polymerase IV</fullName>
        <shortName evidence="1">Pol IV</shortName>
        <ecNumber evidence="1">2.7.7.7</ecNumber>
    </recommendedName>
</protein>